<comment type="function">
    <text evidence="1">Plays a major role to prevent cellular inhibition of viral genome replication. Assembles an SCF-like E3 ubiquitin ligase complex based on the cellular proteins ELOB, ELOC, CUL5 and RBX1, in cooperation with viral E4orf6. This viral RING-type ligase ubiquitinates cellular substrates and targets them to proteasomal degradation: TP53/p53, LIG4, MRE11-RAD50-NBS1 (MRN) complex, ITGA3, DAXX and BLM. E1B-55K probably acts as the substrate-specific adapter of the SCF-like E3 ubiquitin ligase complex. Degradation of host TP53/p53 activity is essential for preventing E1A-induced TP53 accumulation that would otherwise lead to cell apoptosis and growth arrest. E1B-55K also inactivates TP53 transcription-factor activity by binding its transactivation domain. E1B-55K also functions as a SUMO1 E3 ligase for TP53 which causes the latter to be sequestered in promyelocytic leukemia (PML) nuclear bodies thereby contributing to maximal inhibition of TP53 function.</text>
</comment>
<comment type="subunit">
    <text evidence="1 2">Interacts with host PML-4 and PML-5; this interaction promotes efficient subnuclear targeting of E1B-55K to PML nuclear bodies. Interacts with E4-ORF3 protein (By similarity). Interacts with E4-ORF6 protein (By similarity).</text>
</comment>
<comment type="subcellular location">
    <subcellularLocation>
        <location evidence="1">Host nucleus</location>
    </subcellularLocation>
    <subcellularLocation>
        <location evidence="1">Host cytoplasm</location>
    </subcellularLocation>
    <text evidence="1">Colocalizes with host TP53 to host PML nuclear bodies. PML localization of E1B-55K is necessary for E1B-55K-dependent SUMOylation of TP53.</text>
</comment>
<comment type="domain">
    <text evidence="1">Contains a PML interaction motif that allows the subnuclear PML localization.</text>
</comment>
<comment type="similarity">
    <text evidence="4">Belongs to the adenoviridae E1B 55 kDa protein family.</text>
</comment>
<feature type="chain" id="PRO_0000221726" description="E1B 55 kDa protein">
    <location>
        <begin position="1"/>
        <end position="492"/>
    </location>
</feature>
<feature type="region of interest" description="Disordered" evidence="3">
    <location>
        <begin position="22"/>
        <end position="112"/>
    </location>
</feature>
<feature type="compositionally biased region" description="Low complexity" evidence="3">
    <location>
        <begin position="34"/>
        <end position="44"/>
    </location>
</feature>
<feature type="modified residue" description="Phosphoserine" evidence="1">
    <location>
        <position position="486"/>
    </location>
</feature>
<feature type="modified residue" description="Phosphoserine" evidence="1">
    <location>
        <position position="487"/>
    </location>
</feature>
<feature type="modified residue" description="Phosphothreonine" evidence="1">
    <location>
        <position position="491"/>
    </location>
</feature>
<feature type="sequence variant" description="In strain: Grider.">
    <original>G</original>
    <variation>R</variation>
    <location>
        <position position="42"/>
    </location>
</feature>
<feature type="sequence variant" description="In strain: Grider.">
    <original>D</original>
    <variation>Y</variation>
    <location>
        <position position="52"/>
    </location>
</feature>
<feature type="sequence variant" description="In strain: Grider.">
    <original>I</original>
    <variation>V</variation>
    <location>
        <position position="230"/>
    </location>
</feature>
<feature type="sequence variant" description="In strain: Grider.">
    <original>S</original>
    <variation>R</variation>
    <location>
        <position position="259"/>
    </location>
</feature>
<feature type="sequence variant" description="In strain: Grider.">
    <original>V</original>
    <variation>E</variation>
    <location>
        <position position="268"/>
    </location>
</feature>
<accession>P03245</accession>
<dbReference type="EMBL" id="X03000">
    <property type="protein sequence ID" value="CAA26763.1"/>
    <property type="molecule type" value="Genomic_DNA"/>
</dbReference>
<dbReference type="EMBL" id="M38648">
    <property type="protein sequence ID" value="AAA42457.1"/>
    <property type="molecule type" value="Genomic_DNA"/>
</dbReference>
<dbReference type="PIR" id="A03810">
    <property type="entry name" value="WMAD55"/>
</dbReference>
<dbReference type="SMR" id="P03245"/>
<dbReference type="GO" id="GO:0030430">
    <property type="term" value="C:host cell cytoplasm"/>
    <property type="evidence" value="ECO:0000250"/>
    <property type="project" value="UniProtKB"/>
</dbReference>
<dbReference type="GO" id="GO:0042025">
    <property type="term" value="C:host cell nucleus"/>
    <property type="evidence" value="ECO:0007669"/>
    <property type="project" value="UniProtKB-SubCell"/>
</dbReference>
<dbReference type="GO" id="GO:1990756">
    <property type="term" value="F:ubiquitin-like ligase-substrate adaptor activity"/>
    <property type="evidence" value="ECO:0000250"/>
    <property type="project" value="UniProtKB"/>
</dbReference>
<dbReference type="GO" id="GO:0052150">
    <property type="term" value="P:symbiont-mediated perturbation of host apoptosis"/>
    <property type="evidence" value="ECO:0007669"/>
    <property type="project" value="UniProtKB-KW"/>
</dbReference>
<dbReference type="GO" id="GO:0039648">
    <property type="term" value="P:symbiont-mediated perturbation of host ubiquitin-like protein modification"/>
    <property type="evidence" value="ECO:0000250"/>
    <property type="project" value="UniProtKB"/>
</dbReference>
<dbReference type="InterPro" id="IPR006717">
    <property type="entry name" value="Adeno_E1B_55K_N"/>
</dbReference>
<dbReference type="InterPro" id="IPR002612">
    <property type="entry name" value="Adeno_E1B_55kDa"/>
</dbReference>
<dbReference type="InterPro" id="IPR011050">
    <property type="entry name" value="Pectin_lyase_fold/virulence"/>
</dbReference>
<dbReference type="Pfam" id="PF01696">
    <property type="entry name" value="Adeno_E1B_55K"/>
    <property type="match status" value="1"/>
</dbReference>
<dbReference type="Pfam" id="PF04623">
    <property type="entry name" value="Adeno_E1B_55K_N"/>
    <property type="match status" value="1"/>
</dbReference>
<dbReference type="SUPFAM" id="SSF51126">
    <property type="entry name" value="Pectin lyase-like"/>
    <property type="match status" value="1"/>
</dbReference>
<sequence>MDPPNSLQQGIRFGFHSSSFVENMEGSQDEDNLRLLASAASGSSRDTETPTDHASGSAGGAAGGQSESRPGPSGGGVADLFPELRRVLTRSTTSGQNRGIKRERNPSGNNSRTELALSLMSRRRPETVWWHEVQSEGRDEVSILQEKYSLEQLKTCWLEPEDDWEVAIRNYAKISLRPDKQYRITKKINIRNACYISGNGAEVIIDTQDKAAFRCCMMGMWPGVVGMEAITLMNIRFRGDGYNGIVFMANTKLILHGCSFFGFNNTCVEAWGQVSVRGCSFYACWIATSGRVKSQLSVKKCMFERCNLGILNEGEARVRHCAATETACFILIKGNASVKHNMICGHSDERPYQMLTCAGGHCNILATVHIVSHARKKWPVFEHNVITKCTMHIGGRRGMFMPYQCNMNHVKVMLEPDAFSRVSVTGIFDMNIQLWKILRYDDTKPRVRACECGGKHARFQPVCVDVTEDLRPDHLVLACTGAEFGSSGEETD</sequence>
<evidence type="ECO:0000250" key="1">
    <source>
        <dbReference type="UniProtKB" id="P03243"/>
    </source>
</evidence>
<evidence type="ECO:0000250" key="2">
    <source>
        <dbReference type="UniProtKB" id="P03244"/>
    </source>
</evidence>
<evidence type="ECO:0000256" key="3">
    <source>
        <dbReference type="SAM" id="MobiDB-lite"/>
    </source>
</evidence>
<evidence type="ECO:0000305" key="4"/>
<proteinExistence type="inferred from homology"/>
<keyword id="KW-0244">Early protein</keyword>
<keyword id="KW-1035">Host cytoplasm</keyword>
<keyword id="KW-1048">Host nucleus</keyword>
<keyword id="KW-0945">Host-virus interaction</keyword>
<keyword id="KW-1119">Modulation of host cell apoptosis by virus</keyword>
<keyword id="KW-0597">Phosphoprotein</keyword>
<organism>
    <name type="scientific">Human adenovirus B serotype 7</name>
    <name type="common">HAdV-7</name>
    <name type="synonym">Human adenovirus 7</name>
    <dbReference type="NCBI Taxonomy" id="10519"/>
    <lineage>
        <taxon>Viruses</taxon>
        <taxon>Varidnaviria</taxon>
        <taxon>Bamfordvirae</taxon>
        <taxon>Preplasmiviricota</taxon>
        <taxon>Tectiliviricetes</taxon>
        <taxon>Rowavirales</taxon>
        <taxon>Adenoviridae</taxon>
        <taxon>Mastadenovirus</taxon>
        <taxon>Human mastadenovirus B</taxon>
    </lineage>
</organism>
<reference key="1">
    <citation type="journal article" date="1982" name="Gene">
        <title>Gene organization of the transforming region of adenovirus type 7 DNA.</title>
        <authorList>
            <person name="Dijkema R."/>
            <person name="Dekker B.M.M."/>
            <person name="van Ormondt H."/>
        </authorList>
    </citation>
    <scope>NUCLEOTIDE SEQUENCE [GENOMIC DNA]</scope>
    <source>
        <strain>Gomen</strain>
    </source>
</reference>
<reference key="2">
    <citation type="journal article" date="1984" name="Tumor Res.">
        <title>The nucleotide sequence of the transforming HindIII-I.J fragment of adenovirus type 7 DNA.</title>
        <authorList>
            <person name="Yoshida K."/>
            <person name="Fujinaga K."/>
        </authorList>
    </citation>
    <scope>NUCLEOTIDE SEQUENCE [GENOMIC DNA] OF 1-270</scope>
    <source>
        <strain>Grider</strain>
    </source>
</reference>
<protein>
    <recommendedName>
        <fullName>E1B 55 kDa protein</fullName>
        <shortName>E1B-55K</shortName>
    </recommendedName>
    <alternativeName>
        <fullName>E1B protein, large T-antigen</fullName>
    </alternativeName>
    <alternativeName>
        <fullName>E1B-495R</fullName>
    </alternativeName>
</protein>
<name>E1B55_ADE07</name>
<organismHost>
    <name type="scientific">Homo sapiens</name>
    <name type="common">Human</name>
    <dbReference type="NCBI Taxonomy" id="9606"/>
</organismHost>